<keyword id="KW-0030">Aminoacyl-tRNA synthetase</keyword>
<keyword id="KW-0067">ATP-binding</keyword>
<keyword id="KW-0963">Cytoplasm</keyword>
<keyword id="KW-0436">Ligase</keyword>
<keyword id="KW-0547">Nucleotide-binding</keyword>
<keyword id="KW-0648">Protein biosynthesis</keyword>
<keyword id="KW-1185">Reference proteome</keyword>
<feature type="chain" id="PRO_0000151645" description="Arginine--tRNA ligase">
    <location>
        <begin position="1"/>
        <end position="567"/>
    </location>
</feature>
<feature type="short sequence motif" description="'HIGH' region">
    <location>
        <begin position="121"/>
        <end position="131"/>
    </location>
</feature>
<evidence type="ECO:0000255" key="1">
    <source>
        <dbReference type="HAMAP-Rule" id="MF_00123"/>
    </source>
</evidence>
<sequence>MELKAQATSILKEAILKVGFEVEDSELQFETSSHADLASRVAFRLASIHKQNPKELASRIVSAIEIPEGSYIGEVSAAGPYINFLAGRHYMDETVTAVREEKEKFGCGAPKDRILLEHTSANPNGPLHVGHIRNSIIGDTLARILRRAGYDVEVQYYVNDMGRQIAVVSWACERFELDLSRKSDAAIADVYIKANVELDKNPDYVKKIDALMEKVEVGDLQTIERFDKAVSLAIAGIKETLLRLNVVHDKFVNESRFLKSGEVHDIVERIKATGRTETDKGALVVDLSDYGFEKTLVIQRSNGTSLYTTRDLAYHEWKAGQADRIIDVFGADHKLISGQLRATLNAIGIKEPEVVIFEFVSLPEGSMSTRRGQFISADDLFDRVTEAAFEQVESRRPETSTEFKKQVAEMVGIGAVRYDIVRVSPEKSTVFNWKEALDFEKQGAPYIQYSHARACSILEKAKDEAAWDPAEEITPSLLVEDSEIDLIKKMAMFDSIIDLGARELKPHVLAIYARELADSFNQFYRFVPVIAAEDEKVRASRLALVDCARIVLANSLDTLGIGAPESM</sequence>
<accession>Q8TUM3</accession>
<gene>
    <name evidence="1" type="primary">argS</name>
    <name type="ordered locus">MA_0043</name>
</gene>
<comment type="catalytic activity">
    <reaction evidence="1">
        <text>tRNA(Arg) + L-arginine + ATP = L-arginyl-tRNA(Arg) + AMP + diphosphate</text>
        <dbReference type="Rhea" id="RHEA:20301"/>
        <dbReference type="Rhea" id="RHEA-COMP:9658"/>
        <dbReference type="Rhea" id="RHEA-COMP:9673"/>
        <dbReference type="ChEBI" id="CHEBI:30616"/>
        <dbReference type="ChEBI" id="CHEBI:32682"/>
        <dbReference type="ChEBI" id="CHEBI:33019"/>
        <dbReference type="ChEBI" id="CHEBI:78442"/>
        <dbReference type="ChEBI" id="CHEBI:78513"/>
        <dbReference type="ChEBI" id="CHEBI:456215"/>
        <dbReference type="EC" id="6.1.1.19"/>
    </reaction>
</comment>
<comment type="subcellular location">
    <subcellularLocation>
        <location evidence="1">Cytoplasm</location>
    </subcellularLocation>
</comment>
<comment type="similarity">
    <text evidence="1">Belongs to the class-I aminoacyl-tRNA synthetase family.</text>
</comment>
<protein>
    <recommendedName>
        <fullName evidence="1">Arginine--tRNA ligase</fullName>
        <ecNumber evidence="1">6.1.1.19</ecNumber>
    </recommendedName>
    <alternativeName>
        <fullName evidence="1">Arginyl-tRNA synthetase</fullName>
        <shortName evidence="1">ArgRS</shortName>
    </alternativeName>
</protein>
<organism>
    <name type="scientific">Methanosarcina acetivorans (strain ATCC 35395 / DSM 2834 / JCM 12185 / C2A)</name>
    <dbReference type="NCBI Taxonomy" id="188937"/>
    <lineage>
        <taxon>Archaea</taxon>
        <taxon>Methanobacteriati</taxon>
        <taxon>Methanobacteriota</taxon>
        <taxon>Stenosarchaea group</taxon>
        <taxon>Methanomicrobia</taxon>
        <taxon>Methanosarcinales</taxon>
        <taxon>Methanosarcinaceae</taxon>
        <taxon>Methanosarcina</taxon>
    </lineage>
</organism>
<dbReference type="EC" id="6.1.1.19" evidence="1"/>
<dbReference type="EMBL" id="AE010299">
    <property type="protein sequence ID" value="AAM03497.1"/>
    <property type="molecule type" value="Genomic_DNA"/>
</dbReference>
<dbReference type="SMR" id="Q8TUM3"/>
<dbReference type="FunCoup" id="Q8TUM3">
    <property type="interactions" value="207"/>
</dbReference>
<dbReference type="STRING" id="188937.MA_0043"/>
<dbReference type="EnsemblBacteria" id="AAM03497">
    <property type="protein sequence ID" value="AAM03497"/>
    <property type="gene ID" value="MA_0043"/>
</dbReference>
<dbReference type="KEGG" id="mac:MA_0043"/>
<dbReference type="HOGENOM" id="CLU_006406_6_1_2"/>
<dbReference type="InParanoid" id="Q8TUM3"/>
<dbReference type="PhylomeDB" id="Q8TUM3"/>
<dbReference type="Proteomes" id="UP000002487">
    <property type="component" value="Chromosome"/>
</dbReference>
<dbReference type="GO" id="GO:0005737">
    <property type="term" value="C:cytoplasm"/>
    <property type="evidence" value="ECO:0007669"/>
    <property type="project" value="UniProtKB-SubCell"/>
</dbReference>
<dbReference type="GO" id="GO:0004814">
    <property type="term" value="F:arginine-tRNA ligase activity"/>
    <property type="evidence" value="ECO:0000318"/>
    <property type="project" value="GO_Central"/>
</dbReference>
<dbReference type="GO" id="GO:0005524">
    <property type="term" value="F:ATP binding"/>
    <property type="evidence" value="ECO:0007669"/>
    <property type="project" value="UniProtKB-UniRule"/>
</dbReference>
<dbReference type="GO" id="GO:0006420">
    <property type="term" value="P:arginyl-tRNA aminoacylation"/>
    <property type="evidence" value="ECO:0000318"/>
    <property type="project" value="GO_Central"/>
</dbReference>
<dbReference type="CDD" id="cd07956">
    <property type="entry name" value="Anticodon_Ia_Arg"/>
    <property type="match status" value="1"/>
</dbReference>
<dbReference type="CDD" id="cd00671">
    <property type="entry name" value="ArgRS_core"/>
    <property type="match status" value="1"/>
</dbReference>
<dbReference type="FunFam" id="3.30.1360.70:FF:000008">
    <property type="entry name" value="Arginine--tRNA ligase"/>
    <property type="match status" value="1"/>
</dbReference>
<dbReference type="FunFam" id="3.40.50.620:FF:000190">
    <property type="entry name" value="Arginine--tRNA ligase"/>
    <property type="match status" value="1"/>
</dbReference>
<dbReference type="Gene3D" id="3.30.1360.70">
    <property type="entry name" value="Arginyl tRNA synthetase N-terminal domain"/>
    <property type="match status" value="1"/>
</dbReference>
<dbReference type="Gene3D" id="3.40.50.620">
    <property type="entry name" value="HUPs"/>
    <property type="match status" value="1"/>
</dbReference>
<dbReference type="Gene3D" id="1.10.730.10">
    <property type="entry name" value="Isoleucyl-tRNA Synthetase, Domain 1"/>
    <property type="match status" value="1"/>
</dbReference>
<dbReference type="HAMAP" id="MF_00123">
    <property type="entry name" value="Arg_tRNA_synth"/>
    <property type="match status" value="1"/>
</dbReference>
<dbReference type="InterPro" id="IPR001412">
    <property type="entry name" value="aa-tRNA-synth_I_CS"/>
</dbReference>
<dbReference type="InterPro" id="IPR001278">
    <property type="entry name" value="Arg-tRNA-ligase"/>
</dbReference>
<dbReference type="InterPro" id="IPR005148">
    <property type="entry name" value="Arg-tRNA-synth_N"/>
</dbReference>
<dbReference type="InterPro" id="IPR036695">
    <property type="entry name" value="Arg-tRNA-synth_N_sf"/>
</dbReference>
<dbReference type="InterPro" id="IPR035684">
    <property type="entry name" value="ArgRS_core"/>
</dbReference>
<dbReference type="InterPro" id="IPR008909">
    <property type="entry name" value="DALR_anticod-bd"/>
</dbReference>
<dbReference type="InterPro" id="IPR014729">
    <property type="entry name" value="Rossmann-like_a/b/a_fold"/>
</dbReference>
<dbReference type="InterPro" id="IPR009080">
    <property type="entry name" value="tRNAsynth_Ia_anticodon-bd"/>
</dbReference>
<dbReference type="NCBIfam" id="TIGR00456">
    <property type="entry name" value="argS"/>
    <property type="match status" value="1"/>
</dbReference>
<dbReference type="PANTHER" id="PTHR11956:SF5">
    <property type="entry name" value="ARGININE--TRNA LIGASE, CYTOPLASMIC"/>
    <property type="match status" value="1"/>
</dbReference>
<dbReference type="PANTHER" id="PTHR11956">
    <property type="entry name" value="ARGINYL-TRNA SYNTHETASE"/>
    <property type="match status" value="1"/>
</dbReference>
<dbReference type="Pfam" id="PF03485">
    <property type="entry name" value="Arg_tRNA_synt_N"/>
    <property type="match status" value="1"/>
</dbReference>
<dbReference type="Pfam" id="PF05746">
    <property type="entry name" value="DALR_1"/>
    <property type="match status" value="1"/>
</dbReference>
<dbReference type="Pfam" id="PF00750">
    <property type="entry name" value="tRNA-synt_1d"/>
    <property type="match status" value="1"/>
</dbReference>
<dbReference type="PRINTS" id="PR01038">
    <property type="entry name" value="TRNASYNTHARG"/>
</dbReference>
<dbReference type="SMART" id="SM01016">
    <property type="entry name" value="Arg_tRNA_synt_N"/>
    <property type="match status" value="1"/>
</dbReference>
<dbReference type="SMART" id="SM00836">
    <property type="entry name" value="DALR_1"/>
    <property type="match status" value="1"/>
</dbReference>
<dbReference type="SUPFAM" id="SSF47323">
    <property type="entry name" value="Anticodon-binding domain of a subclass of class I aminoacyl-tRNA synthetases"/>
    <property type="match status" value="1"/>
</dbReference>
<dbReference type="SUPFAM" id="SSF55190">
    <property type="entry name" value="Arginyl-tRNA synthetase (ArgRS), N-terminal 'additional' domain"/>
    <property type="match status" value="1"/>
</dbReference>
<dbReference type="SUPFAM" id="SSF52374">
    <property type="entry name" value="Nucleotidylyl transferase"/>
    <property type="match status" value="1"/>
</dbReference>
<dbReference type="PROSITE" id="PS00178">
    <property type="entry name" value="AA_TRNA_LIGASE_I"/>
    <property type="match status" value="1"/>
</dbReference>
<proteinExistence type="inferred from homology"/>
<reference key="1">
    <citation type="journal article" date="2002" name="Genome Res.">
        <title>The genome of Methanosarcina acetivorans reveals extensive metabolic and physiological diversity.</title>
        <authorList>
            <person name="Galagan J.E."/>
            <person name="Nusbaum C."/>
            <person name="Roy A."/>
            <person name="Endrizzi M.G."/>
            <person name="Macdonald P."/>
            <person name="FitzHugh W."/>
            <person name="Calvo S."/>
            <person name="Engels R."/>
            <person name="Smirnov S."/>
            <person name="Atnoor D."/>
            <person name="Brown A."/>
            <person name="Allen N."/>
            <person name="Naylor J."/>
            <person name="Stange-Thomann N."/>
            <person name="DeArellano K."/>
            <person name="Johnson R."/>
            <person name="Linton L."/>
            <person name="McEwan P."/>
            <person name="McKernan K."/>
            <person name="Talamas J."/>
            <person name="Tirrell A."/>
            <person name="Ye W."/>
            <person name="Zimmer A."/>
            <person name="Barber R.D."/>
            <person name="Cann I."/>
            <person name="Graham D.E."/>
            <person name="Grahame D.A."/>
            <person name="Guss A.M."/>
            <person name="Hedderich R."/>
            <person name="Ingram-Smith C."/>
            <person name="Kuettner H.C."/>
            <person name="Krzycki J.A."/>
            <person name="Leigh J.A."/>
            <person name="Li W."/>
            <person name="Liu J."/>
            <person name="Mukhopadhyay B."/>
            <person name="Reeve J.N."/>
            <person name="Smith K."/>
            <person name="Springer T.A."/>
            <person name="Umayam L.A."/>
            <person name="White O."/>
            <person name="White R.H."/>
            <person name="de Macario E.C."/>
            <person name="Ferry J.G."/>
            <person name="Jarrell K.F."/>
            <person name="Jing H."/>
            <person name="Macario A.J.L."/>
            <person name="Paulsen I.T."/>
            <person name="Pritchett M."/>
            <person name="Sowers K.R."/>
            <person name="Swanson R.V."/>
            <person name="Zinder S.H."/>
            <person name="Lander E."/>
            <person name="Metcalf W.W."/>
            <person name="Birren B."/>
        </authorList>
    </citation>
    <scope>NUCLEOTIDE SEQUENCE [LARGE SCALE GENOMIC DNA]</scope>
    <source>
        <strain>ATCC 35395 / DSM 2834 / JCM 12185 / C2A</strain>
    </source>
</reference>
<name>SYR_METAC</name>